<organism>
    <name type="scientific">Staphylococcus epidermidis (strain ATCC 35984 / DSM 28319 / BCRC 17069 / CCUG 31568 / BM 3577 / RP62A)</name>
    <dbReference type="NCBI Taxonomy" id="176279"/>
    <lineage>
        <taxon>Bacteria</taxon>
        <taxon>Bacillati</taxon>
        <taxon>Bacillota</taxon>
        <taxon>Bacilli</taxon>
        <taxon>Bacillales</taxon>
        <taxon>Staphylococcaceae</taxon>
        <taxon>Staphylococcus</taxon>
    </lineage>
</organism>
<accession>Q5HLM5</accession>
<proteinExistence type="evidence at protein level"/>
<evidence type="ECO:0000269" key="1">
    <source>
    </source>
</evidence>
<evidence type="ECO:0000305" key="2"/>
<evidence type="ECO:0000312" key="3">
    <source>
        <dbReference type="EMBL" id="AAW52851.1"/>
    </source>
</evidence>
<evidence type="ECO:0000312" key="4">
    <source>
        <dbReference type="Proteomes" id="UP000000531"/>
    </source>
</evidence>
<evidence type="ECO:0007744" key="5">
    <source>
        <dbReference type="PDB" id="3L7K"/>
    </source>
</evidence>
<evidence type="ECO:0007744" key="6">
    <source>
        <dbReference type="PDB" id="3L7L"/>
    </source>
</evidence>
<evidence type="ECO:0007829" key="7">
    <source>
        <dbReference type="PDB" id="3L7I"/>
    </source>
</evidence>
<evidence type="ECO:0007829" key="8">
    <source>
        <dbReference type="PDB" id="3L7J"/>
    </source>
</evidence>
<evidence type="ECO:0007829" key="9">
    <source>
        <dbReference type="PDB" id="3L7K"/>
    </source>
</evidence>
<gene>
    <name evidence="3" type="primary">tagF</name>
    <name evidence="3" type="ordered locus">SERP1960</name>
</gene>
<comment type="function">
    <text evidence="1">Responsible for the polymerization of the main chain of the major teichoic acid by sequential transfer of glycerol phosphate units from CDP-glycerol to the disaccharide linkage unit. Synthesizes polymers of approximately 35 glycerol phosphate units in length.</text>
</comment>
<comment type="catalytic activity">
    <reaction evidence="1">
        <text>4-O-[(2R)-glycerylphospho]-N-acetyl-beta-D-mannosaminyl-(1-&gt;4)-N-acetyl-alpha-D-glucosaminyl di-trans,octa-cis-undecaprenyl diphosphate + n CDP-glycerol = 4-O-{[(2R)-1-glycerylphospho](n)-(2R)-1-glycerylphospho}-N-acetyl-beta-D-mannosaminyl-(1-&gt;4)-N-acetyl-alpha-D-glucosaminyl undecaprenyl diphosphate + n CMP + n H(+)</text>
        <dbReference type="Rhea" id="RHEA:13565"/>
        <dbReference type="Rhea" id="RHEA-COMP:12597"/>
        <dbReference type="ChEBI" id="CHEBI:15378"/>
        <dbReference type="ChEBI" id="CHEBI:58311"/>
        <dbReference type="ChEBI" id="CHEBI:60377"/>
        <dbReference type="ChEBI" id="CHEBI:132211"/>
        <dbReference type="ChEBI" id="CHEBI:132224"/>
        <dbReference type="EC" id="2.7.8.12"/>
    </reaction>
</comment>
<comment type="pathway">
    <text evidence="2">Cell wall biogenesis; poly(glycerol phosphate) teichoic acid biosynthesis.</text>
</comment>
<comment type="subcellular location">
    <subcellularLocation>
        <location evidence="2">Cell membrane</location>
        <topology evidence="2">Peripheral membrane protein</topology>
    </subcellularLocation>
</comment>
<comment type="similarity">
    <text evidence="2">Belongs to the CDP-glycerol glycerophosphotransferase family.</text>
</comment>
<reference key="1">
    <citation type="journal article" date="2005" name="J. Bacteriol.">
        <title>Insights on evolution of virulence and resistance from the complete genome analysis of an early methicillin-resistant Staphylococcus aureus strain and a biofilm-producing methicillin-resistant Staphylococcus epidermidis strain.</title>
        <authorList>
            <person name="Gill S.R."/>
            <person name="Fouts D.E."/>
            <person name="Archer G.L."/>
            <person name="Mongodin E.F."/>
            <person name="DeBoy R.T."/>
            <person name="Ravel J."/>
            <person name="Paulsen I.T."/>
            <person name="Kolonay J.F."/>
            <person name="Brinkac L.M."/>
            <person name="Beanan M.J."/>
            <person name="Dodson R.J."/>
            <person name="Daugherty S.C."/>
            <person name="Madupu R."/>
            <person name="Angiuoli S.V."/>
            <person name="Durkin A.S."/>
            <person name="Haft D.H."/>
            <person name="Vamathevan J.J."/>
            <person name="Khouri H."/>
            <person name="Utterback T.R."/>
            <person name="Lee C."/>
            <person name="Dimitrov G."/>
            <person name="Jiang L."/>
            <person name="Qin H."/>
            <person name="Weidman J."/>
            <person name="Tran K."/>
            <person name="Kang K.H."/>
            <person name="Hance I.R."/>
            <person name="Nelson K.E."/>
            <person name="Fraser C.M."/>
        </authorList>
    </citation>
    <scope>NUCLEOTIDE SEQUENCE [LARGE SCALE GENOMIC DNA]</scope>
    <source>
        <strain evidence="4">ATCC 35984 / DSM 28319 / BCRC 17069 / CCUG 31568 / BM 3577 / RP62A</strain>
    </source>
</reference>
<reference key="2">
    <citation type="journal article" date="2010" name="Nat. Struct. Mol. Biol.">
        <title>Structure of the bacterial teichoic acid polymerase TagF provides insights into membrane association and catalysis.</title>
        <authorList>
            <person name="Lovering A.L."/>
            <person name="Lin L.Y."/>
            <person name="Sewell E.W."/>
            <person name="Spreter T."/>
            <person name="Brown E.D."/>
            <person name="Strynadka N.C."/>
        </authorList>
    </citation>
    <scope>X-RAY CRYSTALLOGRAPHY (2.70 ANGSTROMS) OF 313-721 OF APOENZYME; MUTANT ALA-584 AND OF MUTANT ASN-444 IN COMPLEX WITH GLYCEROL-CDP</scope>
    <scope>FUNCTION</scope>
    <scope>CATALYTIC ACTIVITY</scope>
</reference>
<dbReference type="EC" id="2.7.8.12" evidence="1"/>
<dbReference type="EMBL" id="CP000029">
    <property type="protein sequence ID" value="AAW52851.1"/>
    <property type="molecule type" value="Genomic_DNA"/>
</dbReference>
<dbReference type="PDB" id="3L7I">
    <property type="method" value="X-ray"/>
    <property type="resolution" value="2.70 A"/>
    <property type="chains" value="A/B/C/D=1-721"/>
</dbReference>
<dbReference type="PDB" id="3L7J">
    <property type="method" value="X-ray"/>
    <property type="resolution" value="2.81 A"/>
    <property type="chains" value="A/B/C/D=1-721"/>
</dbReference>
<dbReference type="PDB" id="3L7K">
    <property type="method" value="X-ray"/>
    <property type="resolution" value="3.10 A"/>
    <property type="chains" value="A/B/C/D=1-721"/>
</dbReference>
<dbReference type="PDB" id="3L7L">
    <property type="method" value="X-ray"/>
    <property type="resolution" value="2.95 A"/>
    <property type="chains" value="A/B/C/D=1-721"/>
</dbReference>
<dbReference type="PDB" id="3L7M">
    <property type="method" value="X-ray"/>
    <property type="resolution" value="2.85 A"/>
    <property type="chains" value="A/B/C/D=1-721"/>
</dbReference>
<dbReference type="PDBsum" id="3L7I"/>
<dbReference type="PDBsum" id="3L7J"/>
<dbReference type="PDBsum" id="3L7K"/>
<dbReference type="PDBsum" id="3L7L"/>
<dbReference type="PDBsum" id="3L7M"/>
<dbReference type="SMR" id="Q5HLM5"/>
<dbReference type="STRING" id="176279.SERP1960"/>
<dbReference type="CAZy" id="GT2">
    <property type="family name" value="Glycosyltransferase Family 2"/>
</dbReference>
<dbReference type="KEGG" id="ser:SERP1960"/>
<dbReference type="eggNOG" id="COG0463">
    <property type="taxonomic scope" value="Bacteria"/>
</dbReference>
<dbReference type="eggNOG" id="COG1887">
    <property type="taxonomic scope" value="Bacteria"/>
</dbReference>
<dbReference type="HOGENOM" id="CLU_003394_2_0_9"/>
<dbReference type="BRENDA" id="2.7.8.12">
    <property type="organism ID" value="5875"/>
</dbReference>
<dbReference type="UniPathway" id="UPA00827"/>
<dbReference type="EvolutionaryTrace" id="Q5HLM5"/>
<dbReference type="Proteomes" id="UP000000531">
    <property type="component" value="Chromosome"/>
</dbReference>
<dbReference type="GO" id="GO:0005886">
    <property type="term" value="C:plasma membrane"/>
    <property type="evidence" value="ECO:0007669"/>
    <property type="project" value="UniProtKB-SubCell"/>
</dbReference>
<dbReference type="GO" id="GO:0047355">
    <property type="term" value="F:CDP-glycerol glycerophosphotransferase activity"/>
    <property type="evidence" value="ECO:0007669"/>
    <property type="project" value="UniProtKB-EC"/>
</dbReference>
<dbReference type="GO" id="GO:0071555">
    <property type="term" value="P:cell wall organization"/>
    <property type="evidence" value="ECO:0007669"/>
    <property type="project" value="UniProtKB-KW"/>
</dbReference>
<dbReference type="GO" id="GO:0019350">
    <property type="term" value="P:teichoic acid biosynthetic process"/>
    <property type="evidence" value="ECO:0007669"/>
    <property type="project" value="UniProtKB-KW"/>
</dbReference>
<dbReference type="CDD" id="cd00761">
    <property type="entry name" value="Glyco_tranf_GTA_type"/>
    <property type="match status" value="1"/>
</dbReference>
<dbReference type="Gene3D" id="3.40.50.11820">
    <property type="match status" value="1"/>
</dbReference>
<dbReference type="Gene3D" id="3.40.50.12580">
    <property type="match status" value="1"/>
</dbReference>
<dbReference type="Gene3D" id="3.90.550.10">
    <property type="entry name" value="Spore Coat Polysaccharide Biosynthesis Protein SpsA, Chain A"/>
    <property type="match status" value="1"/>
</dbReference>
<dbReference type="InterPro" id="IPR007554">
    <property type="entry name" value="Glycerophosphate_synth"/>
</dbReference>
<dbReference type="InterPro" id="IPR001173">
    <property type="entry name" value="Glyco_trans_2-like"/>
</dbReference>
<dbReference type="InterPro" id="IPR029044">
    <property type="entry name" value="Nucleotide-diphossugar_trans"/>
</dbReference>
<dbReference type="InterPro" id="IPR043148">
    <property type="entry name" value="TagF_C"/>
</dbReference>
<dbReference type="InterPro" id="IPR043149">
    <property type="entry name" value="TagF_N"/>
</dbReference>
<dbReference type="InterPro" id="IPR051612">
    <property type="entry name" value="Teichoic_Acid_Biosynth"/>
</dbReference>
<dbReference type="PANTHER" id="PTHR37316">
    <property type="entry name" value="TEICHOIC ACID GLYCEROL-PHOSPHATE PRIMASE"/>
    <property type="match status" value="1"/>
</dbReference>
<dbReference type="PANTHER" id="PTHR37316:SF3">
    <property type="entry name" value="TEICHOIC ACID GLYCEROL-PHOSPHATE TRANSFERASE"/>
    <property type="match status" value="1"/>
</dbReference>
<dbReference type="Pfam" id="PF00535">
    <property type="entry name" value="Glycos_transf_2"/>
    <property type="match status" value="1"/>
</dbReference>
<dbReference type="Pfam" id="PF04464">
    <property type="entry name" value="Glyphos_transf"/>
    <property type="match status" value="1"/>
</dbReference>
<dbReference type="SUPFAM" id="SSF53448">
    <property type="entry name" value="Nucleotide-diphospho-sugar transferases"/>
    <property type="match status" value="1"/>
</dbReference>
<dbReference type="SUPFAM" id="SSF53756">
    <property type="entry name" value="UDP-Glycosyltransferase/glycogen phosphorylase"/>
    <property type="match status" value="1"/>
</dbReference>
<protein>
    <recommendedName>
        <fullName evidence="2">Teichoic acid poly(glycerol phosphate) polymerase</fullName>
        <ecNumber evidence="1">2.7.8.12</ecNumber>
    </recommendedName>
    <alternativeName>
        <fullName evidence="2">CDP-glycerol:poly(glycerophosphate) glycerophosphotransferase</fullName>
    </alternativeName>
    <alternativeName>
        <fullName evidence="2">CGPTase</fullName>
    </alternativeName>
    <alternativeName>
        <fullName evidence="2">Major teichoic acid biosynthesis protein F</fullName>
    </alternativeName>
    <alternativeName>
        <fullName evidence="2">Poly(glycerol phosphate) polymerase</fullName>
    </alternativeName>
    <alternativeName>
        <fullName evidence="2">Tag polymerase</fullName>
    </alternativeName>
</protein>
<sequence>MNKLTIIVTYYNAEEYITGCLESIKQQRTQDFNLIIVNDGSTDQSKKLMDEAIKDYDKNIRFIDLDENSGHAHARNIALEEVETPYFMFLDADDELASYAITFYLEKFNNTDGLIAPIHSFTTQRPQFVDLDRVRVEYFNAKENINSFLRKQSACNIIFRTAIVRAHHIRFNENLNTYVDWSFVLEYMKYVNKFVRIFNFPFYFRGEVYDPFETLTLSEQNFDILFKDYVNSFYDAIKRATNPKVREFIVTKMGNKIANEFEPTRYDINERYQTHKDTLVELSKFLHVHLVKNQKLINKIETILLMNNETDKAFKVNQFRKTLRHVKNIVLRRKNKERSLYDLTDKEDNVKPKTIVFESFGGKNYSDSPKYIYEYMQKYYPNYRYIWSFKNPDKNVVPGSAEKVKRNSAEYYQAYSEASHWVSNARTPLYLNKKENQTYIQTWHGTPLKRLANDMKVVRMPGTTTPKYKRNFNRETSRWDYLISPNRYSTEIFRSAFWMDEERILEIGYPRNDVLVNRANDQEYLDEIRTHLNLPSDKKVIMYAPTWRDDEFVSKGKYLFELKIDLDNLYKELGDDYVILLRMHYLISNALDLSGYENFAIDVSNYNDVSELFLISDCLITDYSSVMFDYGILKRPQFFFAYDIDKYDKGLRGFYMNYMEDLPGPIYTEPYGLAKELKNLDKVQQQYQEKIDAFYDRFCSVDNGKASQYIGDLIHKDIKEQ</sequence>
<feature type="chain" id="PRO_0000438782" description="Teichoic acid poly(glycerol phosphate) polymerase">
    <location>
        <begin position="1"/>
        <end position="721"/>
    </location>
</feature>
<feature type="binding site" evidence="1 5 6">
    <location>
        <begin position="443"/>
        <end position="447"/>
    </location>
    <ligand>
        <name>CDP-glycerol</name>
        <dbReference type="ChEBI" id="CHEBI:58311"/>
    </ligand>
</feature>
<feature type="binding site" evidence="1 5 6">
    <location>
        <position position="511"/>
    </location>
    <ligand>
        <name>CDP-glycerol</name>
        <dbReference type="ChEBI" id="CHEBI:58311"/>
    </ligand>
</feature>
<feature type="binding site" evidence="1 5 6">
    <location>
        <begin position="545"/>
        <end position="546"/>
    </location>
    <ligand>
        <name>CDP-glycerol</name>
        <dbReference type="ChEBI" id="CHEBI:58311"/>
    </ligand>
</feature>
<feature type="binding site" evidence="1 5 6">
    <location>
        <begin position="582"/>
        <end position="584"/>
    </location>
    <ligand>
        <name>CDP-glycerol</name>
        <dbReference type="ChEBI" id="CHEBI:58311"/>
    </ligand>
</feature>
<feature type="binding site" evidence="1 5 6">
    <location>
        <begin position="624"/>
        <end position="625"/>
    </location>
    <ligand>
        <name>CDP-glycerol</name>
        <dbReference type="ChEBI" id="CHEBI:58311"/>
    </ligand>
</feature>
<feature type="binding site" evidence="1 5 6">
    <location>
        <position position="629"/>
    </location>
    <ligand>
        <name>CDP-glycerol</name>
        <dbReference type="ChEBI" id="CHEBI:58311"/>
    </ligand>
</feature>
<feature type="helix" evidence="7">
    <location>
        <begin position="316"/>
        <end position="331"/>
    </location>
</feature>
<feature type="helix" evidence="7">
    <location>
        <begin position="336"/>
        <end position="344"/>
    </location>
</feature>
<feature type="helix" evidence="7">
    <location>
        <begin position="347"/>
        <end position="349"/>
    </location>
</feature>
<feature type="strand" evidence="7">
    <location>
        <begin position="351"/>
        <end position="359"/>
    </location>
</feature>
<feature type="helix" evidence="7">
    <location>
        <begin position="360"/>
        <end position="362"/>
    </location>
</feature>
<feature type="helix" evidence="7">
    <location>
        <begin position="367"/>
        <end position="379"/>
    </location>
</feature>
<feature type="strand" evidence="7">
    <location>
        <begin position="383"/>
        <end position="391"/>
    </location>
</feature>
<feature type="helix" evidence="7">
    <location>
        <begin position="392"/>
        <end position="394"/>
    </location>
</feature>
<feature type="strand" evidence="7">
    <location>
        <begin position="402"/>
        <end position="405"/>
    </location>
</feature>
<feature type="helix" evidence="7">
    <location>
        <begin position="409"/>
        <end position="417"/>
    </location>
</feature>
<feature type="strand" evidence="7">
    <location>
        <begin position="418"/>
        <end position="425"/>
    </location>
</feature>
<feature type="strand" evidence="9">
    <location>
        <begin position="429"/>
        <end position="431"/>
    </location>
</feature>
<feature type="strand" evidence="7">
    <location>
        <begin position="438"/>
        <end position="441"/>
    </location>
</feature>
<feature type="helix" evidence="7">
    <location>
        <begin position="452"/>
        <end position="454"/>
    </location>
</feature>
<feature type="helix" evidence="7">
    <location>
        <begin position="465"/>
        <end position="476"/>
    </location>
</feature>
<feature type="strand" evidence="7">
    <location>
        <begin position="480"/>
        <end position="486"/>
    </location>
</feature>
<feature type="helix" evidence="7">
    <location>
        <begin position="487"/>
        <end position="496"/>
    </location>
</feature>
<feature type="helix" evidence="7">
    <location>
        <begin position="501"/>
        <end position="503"/>
    </location>
</feature>
<feature type="strand" evidence="7">
    <location>
        <begin position="504"/>
        <end position="507"/>
    </location>
</feature>
<feature type="helix" evidence="7">
    <location>
        <begin position="510"/>
        <end position="512"/>
    </location>
</feature>
<feature type="helix" evidence="7">
    <location>
        <begin position="513"/>
        <end position="517"/>
    </location>
</feature>
<feature type="turn" evidence="8">
    <location>
        <begin position="518"/>
        <end position="520"/>
    </location>
</feature>
<feature type="helix" evidence="7">
    <location>
        <begin position="522"/>
        <end position="531"/>
    </location>
</feature>
<feature type="strand" evidence="7">
    <location>
        <begin position="539"/>
        <end position="543"/>
    </location>
</feature>
<feature type="helix" evidence="7">
    <location>
        <begin position="549"/>
        <end position="551"/>
    </location>
</feature>
<feature type="helix" evidence="7">
    <location>
        <begin position="554"/>
        <end position="556"/>
    </location>
</feature>
<feature type="helix" evidence="7">
    <location>
        <begin position="566"/>
        <end position="573"/>
    </location>
</feature>
<feature type="turn" evidence="7">
    <location>
        <begin position="574"/>
        <end position="576"/>
    </location>
</feature>
<feature type="strand" evidence="7">
    <location>
        <begin position="577"/>
        <end position="581"/>
    </location>
</feature>
<feature type="helix" evidence="7">
    <location>
        <begin position="585"/>
        <end position="588"/>
    </location>
</feature>
<feature type="turn" evidence="7">
    <location>
        <begin position="597"/>
        <end position="599"/>
    </location>
</feature>
<feature type="strand" evidence="7">
    <location>
        <begin position="600"/>
        <end position="602"/>
    </location>
</feature>
<feature type="helix" evidence="7">
    <location>
        <begin position="609"/>
        <end position="614"/>
    </location>
</feature>
<feature type="strand" evidence="7">
    <location>
        <begin position="617"/>
        <end position="623"/>
    </location>
</feature>
<feature type="helix" evidence="7">
    <location>
        <begin position="626"/>
        <end position="630"/>
    </location>
</feature>
<feature type="helix" evidence="7">
    <location>
        <begin position="631"/>
        <end position="633"/>
    </location>
</feature>
<feature type="strand" evidence="7">
    <location>
        <begin position="637"/>
        <end position="640"/>
    </location>
</feature>
<feature type="turn" evidence="7">
    <location>
        <begin position="642"/>
        <end position="648"/>
    </location>
</feature>
<feature type="strand" evidence="7">
    <location>
        <begin position="653"/>
        <end position="656"/>
    </location>
</feature>
<feature type="strand" evidence="7">
    <location>
        <begin position="660"/>
        <end position="664"/>
    </location>
</feature>
<feature type="strand" evidence="7">
    <location>
        <begin position="666"/>
        <end position="669"/>
    </location>
</feature>
<feature type="helix" evidence="7">
    <location>
        <begin position="670"/>
        <end position="677"/>
    </location>
</feature>
<feature type="helix" evidence="7">
    <location>
        <begin position="680"/>
        <end position="686"/>
    </location>
</feature>
<feature type="helix" evidence="7">
    <location>
        <begin position="688"/>
        <end position="698"/>
    </location>
</feature>
<feature type="turn" evidence="8">
    <location>
        <begin position="699"/>
        <end position="701"/>
    </location>
</feature>
<feature type="helix" evidence="7">
    <location>
        <begin position="706"/>
        <end position="721"/>
    </location>
</feature>
<keyword id="KW-0002">3D-structure</keyword>
<keyword id="KW-1003">Cell membrane</keyword>
<keyword id="KW-0961">Cell wall biogenesis/degradation</keyword>
<keyword id="KW-0472">Membrane</keyword>
<keyword id="KW-1185">Reference proteome</keyword>
<keyword id="KW-0777">Teichoic acid biosynthesis</keyword>
<keyword id="KW-0808">Transferase</keyword>
<name>TAGF_STAEQ</name>